<reference key="1">
    <citation type="journal article" date="2007" name="PLoS Genet.">
        <title>Patterns and implications of gene gain and loss in the evolution of Prochlorococcus.</title>
        <authorList>
            <person name="Kettler G.C."/>
            <person name="Martiny A.C."/>
            <person name="Huang K."/>
            <person name="Zucker J."/>
            <person name="Coleman M.L."/>
            <person name="Rodrigue S."/>
            <person name="Chen F."/>
            <person name="Lapidus A."/>
            <person name="Ferriera S."/>
            <person name="Johnson J."/>
            <person name="Steglich C."/>
            <person name="Church G.M."/>
            <person name="Richardson P."/>
            <person name="Chisholm S.W."/>
        </authorList>
    </citation>
    <scope>NUCLEOTIDE SEQUENCE [LARGE SCALE GENOMIC DNA]</scope>
    <source>
        <strain>NATL1A</strain>
    </source>
</reference>
<sequence length="139" mass="15972">MADKKSSPKKENPQDKTYAIVEASGKQFWLQPNRYYDFDRCQAEVDDVLTLENVLLLNDGKDLKLGKPYVKDAKVEIKVLEHRRGPKIIVYKMRPKKKTRRKNGHRQELTRVLVQSISIGSNTKKSKAVKTTASKVESD</sequence>
<keyword id="KW-0687">Ribonucleoprotein</keyword>
<keyword id="KW-0689">Ribosomal protein</keyword>
<keyword id="KW-0694">RNA-binding</keyword>
<keyword id="KW-0699">rRNA-binding</keyword>
<dbReference type="EMBL" id="CP000553">
    <property type="protein sequence ID" value="ABM76327.1"/>
    <property type="molecule type" value="Genomic_DNA"/>
</dbReference>
<dbReference type="RefSeq" id="WP_011824322.1">
    <property type="nucleotide sequence ID" value="NC_008819.1"/>
</dbReference>
<dbReference type="SMR" id="A2C4B7"/>
<dbReference type="KEGG" id="pme:NATL1_17711"/>
<dbReference type="eggNOG" id="COG0261">
    <property type="taxonomic scope" value="Bacteria"/>
</dbReference>
<dbReference type="HOGENOM" id="CLU_061463_6_0_3"/>
<dbReference type="Proteomes" id="UP000002592">
    <property type="component" value="Chromosome"/>
</dbReference>
<dbReference type="GO" id="GO:0005737">
    <property type="term" value="C:cytoplasm"/>
    <property type="evidence" value="ECO:0007669"/>
    <property type="project" value="UniProtKB-ARBA"/>
</dbReference>
<dbReference type="GO" id="GO:1990904">
    <property type="term" value="C:ribonucleoprotein complex"/>
    <property type="evidence" value="ECO:0007669"/>
    <property type="project" value="UniProtKB-KW"/>
</dbReference>
<dbReference type="GO" id="GO:0005840">
    <property type="term" value="C:ribosome"/>
    <property type="evidence" value="ECO:0007669"/>
    <property type="project" value="UniProtKB-KW"/>
</dbReference>
<dbReference type="GO" id="GO:0019843">
    <property type="term" value="F:rRNA binding"/>
    <property type="evidence" value="ECO:0007669"/>
    <property type="project" value="UniProtKB-UniRule"/>
</dbReference>
<dbReference type="GO" id="GO:0003735">
    <property type="term" value="F:structural constituent of ribosome"/>
    <property type="evidence" value="ECO:0007669"/>
    <property type="project" value="InterPro"/>
</dbReference>
<dbReference type="GO" id="GO:0006412">
    <property type="term" value="P:translation"/>
    <property type="evidence" value="ECO:0007669"/>
    <property type="project" value="UniProtKB-UniRule"/>
</dbReference>
<dbReference type="HAMAP" id="MF_01363">
    <property type="entry name" value="Ribosomal_bL21"/>
    <property type="match status" value="1"/>
</dbReference>
<dbReference type="InterPro" id="IPR028909">
    <property type="entry name" value="bL21-like"/>
</dbReference>
<dbReference type="InterPro" id="IPR036164">
    <property type="entry name" value="bL21-like_sf"/>
</dbReference>
<dbReference type="InterPro" id="IPR001787">
    <property type="entry name" value="Ribosomal_bL21"/>
</dbReference>
<dbReference type="InterPro" id="IPR018258">
    <property type="entry name" value="Ribosomal_bL21_CS"/>
</dbReference>
<dbReference type="NCBIfam" id="TIGR00061">
    <property type="entry name" value="L21"/>
    <property type="match status" value="1"/>
</dbReference>
<dbReference type="PANTHER" id="PTHR21349">
    <property type="entry name" value="50S RIBOSOMAL PROTEIN L21"/>
    <property type="match status" value="1"/>
</dbReference>
<dbReference type="PANTHER" id="PTHR21349:SF0">
    <property type="entry name" value="LARGE RIBOSOMAL SUBUNIT PROTEIN BL21M"/>
    <property type="match status" value="1"/>
</dbReference>
<dbReference type="Pfam" id="PF00829">
    <property type="entry name" value="Ribosomal_L21p"/>
    <property type="match status" value="1"/>
</dbReference>
<dbReference type="SUPFAM" id="SSF141091">
    <property type="entry name" value="L21p-like"/>
    <property type="match status" value="1"/>
</dbReference>
<dbReference type="PROSITE" id="PS01169">
    <property type="entry name" value="RIBOSOMAL_L21"/>
    <property type="match status" value="1"/>
</dbReference>
<comment type="function">
    <text evidence="1">This protein binds to 23S rRNA in the presence of protein L20.</text>
</comment>
<comment type="subunit">
    <text evidence="1">Part of the 50S ribosomal subunit. Contacts protein L20.</text>
</comment>
<comment type="similarity">
    <text evidence="1">Belongs to the bacterial ribosomal protein bL21 family.</text>
</comment>
<proteinExistence type="inferred from homology"/>
<evidence type="ECO:0000255" key="1">
    <source>
        <dbReference type="HAMAP-Rule" id="MF_01363"/>
    </source>
</evidence>
<evidence type="ECO:0000305" key="2"/>
<gene>
    <name evidence="1" type="primary">rplU</name>
    <name evidence="1" type="synonym">rpl21</name>
    <name type="ordered locus">NATL1_17711</name>
</gene>
<protein>
    <recommendedName>
        <fullName evidence="1">Large ribosomal subunit protein bL21</fullName>
    </recommendedName>
    <alternativeName>
        <fullName evidence="2">50S ribosomal protein L21</fullName>
    </alternativeName>
</protein>
<feature type="chain" id="PRO_1000067872" description="Large ribosomal subunit protein bL21">
    <location>
        <begin position="1"/>
        <end position="139"/>
    </location>
</feature>
<organism>
    <name type="scientific">Prochlorococcus marinus (strain NATL1A)</name>
    <dbReference type="NCBI Taxonomy" id="167555"/>
    <lineage>
        <taxon>Bacteria</taxon>
        <taxon>Bacillati</taxon>
        <taxon>Cyanobacteriota</taxon>
        <taxon>Cyanophyceae</taxon>
        <taxon>Synechococcales</taxon>
        <taxon>Prochlorococcaceae</taxon>
        <taxon>Prochlorococcus</taxon>
    </lineage>
</organism>
<accession>A2C4B7</accession>
<name>RL21_PROM1</name>